<sequence>MRTWKKGTAVASTSTLDNVINLCKRRGFVFPCGEIYGGTRAAWDYGPFGVELKENIKRQWWRAMVTRRDDVVGLDSSVILPREVWVASGHVGVFNDPLTECLSCHKRMRADHLQEGHAAKHGIADPDSISLEEVNCPNCGNKGQWTEPRDFNMMLKTYLGPVEDKSGLHYLRPETAQGIFVNFQNVLTSARKKPPFGIAQTGKSFRNEITPGNFIFRTREFEQMEMEFFVEPGTDEEWHQYWIDVRTAWYTDLGINPDNLRHYEHPKEKLSHYSKRTVDVEYKFGFSGSDWGELEGIANRTDFDLGNHSRHSGKDLSYYDQANNKRYLPYVIEPAAGLTRSLMAFMVDAYTEDEAPNAKGGVDKRTVLKLDPRLSPVKAAVLPLSRNSDLSPKARDLAARLREHWNVDFDDAQAIGKRYRRQDEIGTPFCITVDFDSLEDDAVTIRERDTMAQQRVSIDKVEEYLGGKLLGC</sequence>
<feature type="chain" id="PRO_0000072971" description="Glycine--tRNA ligase">
    <location>
        <begin position="1"/>
        <end position="472"/>
    </location>
</feature>
<feature type="binding site" evidence="1">
    <location>
        <position position="109"/>
    </location>
    <ligand>
        <name>substrate</name>
    </ligand>
</feature>
<feature type="binding site" evidence="1">
    <location>
        <position position="174"/>
    </location>
    <ligand>
        <name>substrate</name>
    </ligand>
</feature>
<feature type="binding site" evidence="1">
    <location>
        <begin position="206"/>
        <end position="208"/>
    </location>
    <ligand>
        <name>ATP</name>
        <dbReference type="ChEBI" id="CHEBI:30616"/>
    </ligand>
</feature>
<feature type="binding site" evidence="1">
    <location>
        <begin position="216"/>
        <end position="221"/>
    </location>
    <ligand>
        <name>ATP</name>
        <dbReference type="ChEBI" id="CHEBI:30616"/>
    </ligand>
</feature>
<feature type="binding site" evidence="1">
    <location>
        <begin position="221"/>
        <end position="225"/>
    </location>
    <ligand>
        <name>substrate</name>
    </ligand>
</feature>
<feature type="binding site" evidence="1">
    <location>
        <begin position="293"/>
        <end position="294"/>
    </location>
    <ligand>
        <name>ATP</name>
        <dbReference type="ChEBI" id="CHEBI:30616"/>
    </ligand>
</feature>
<feature type="binding site" evidence="1">
    <location>
        <begin position="333"/>
        <end position="337"/>
    </location>
    <ligand>
        <name>substrate</name>
    </ligand>
</feature>
<feature type="binding site" evidence="1">
    <location>
        <begin position="337"/>
        <end position="340"/>
    </location>
    <ligand>
        <name>ATP</name>
        <dbReference type="ChEBI" id="CHEBI:30616"/>
    </ligand>
</feature>
<dbReference type="EC" id="6.1.1.14" evidence="1"/>
<dbReference type="EMBL" id="AE017283">
    <property type="protein sequence ID" value="AAT82702.1"/>
    <property type="status" value="ALT_INIT"/>
    <property type="molecule type" value="Genomic_DNA"/>
</dbReference>
<dbReference type="SMR" id="Q6A964"/>
<dbReference type="EnsemblBacteria" id="AAT82702">
    <property type="protein sequence ID" value="AAT82702"/>
    <property type="gene ID" value="PPA0949"/>
</dbReference>
<dbReference type="KEGG" id="pac:PPA0949"/>
<dbReference type="eggNOG" id="COG0423">
    <property type="taxonomic scope" value="Bacteria"/>
</dbReference>
<dbReference type="HOGENOM" id="CLU_015515_2_1_11"/>
<dbReference type="Proteomes" id="UP000000603">
    <property type="component" value="Chromosome"/>
</dbReference>
<dbReference type="GO" id="GO:0005737">
    <property type="term" value="C:cytoplasm"/>
    <property type="evidence" value="ECO:0007669"/>
    <property type="project" value="UniProtKB-SubCell"/>
</dbReference>
<dbReference type="GO" id="GO:0005524">
    <property type="term" value="F:ATP binding"/>
    <property type="evidence" value="ECO:0007669"/>
    <property type="project" value="UniProtKB-UniRule"/>
</dbReference>
<dbReference type="GO" id="GO:0004820">
    <property type="term" value="F:glycine-tRNA ligase activity"/>
    <property type="evidence" value="ECO:0000250"/>
    <property type="project" value="UniProtKB"/>
</dbReference>
<dbReference type="GO" id="GO:0046983">
    <property type="term" value="F:protein dimerization activity"/>
    <property type="evidence" value="ECO:0000250"/>
    <property type="project" value="UniProtKB"/>
</dbReference>
<dbReference type="GO" id="GO:0006426">
    <property type="term" value="P:glycyl-tRNA aminoacylation"/>
    <property type="evidence" value="ECO:0007669"/>
    <property type="project" value="UniProtKB-UniRule"/>
</dbReference>
<dbReference type="CDD" id="cd00774">
    <property type="entry name" value="GlyRS-like_core"/>
    <property type="match status" value="1"/>
</dbReference>
<dbReference type="CDD" id="cd00858">
    <property type="entry name" value="GlyRS_anticodon"/>
    <property type="match status" value="1"/>
</dbReference>
<dbReference type="FunFam" id="3.40.50.800:FF:000002">
    <property type="entry name" value="Glycine--tRNA ligase"/>
    <property type="match status" value="1"/>
</dbReference>
<dbReference type="Gene3D" id="3.40.50.800">
    <property type="entry name" value="Anticodon-binding domain"/>
    <property type="match status" value="1"/>
</dbReference>
<dbReference type="Gene3D" id="3.30.930.10">
    <property type="entry name" value="Bira Bifunctional Protein, Domain 2"/>
    <property type="match status" value="1"/>
</dbReference>
<dbReference type="HAMAP" id="MF_00253_B">
    <property type="entry name" value="Gly_tRNA_synth_B"/>
    <property type="match status" value="1"/>
</dbReference>
<dbReference type="InterPro" id="IPR002314">
    <property type="entry name" value="aa-tRNA-synt_IIb"/>
</dbReference>
<dbReference type="InterPro" id="IPR006195">
    <property type="entry name" value="aa-tRNA-synth_II"/>
</dbReference>
<dbReference type="InterPro" id="IPR045864">
    <property type="entry name" value="aa-tRNA-synth_II/BPL/LPL"/>
</dbReference>
<dbReference type="InterPro" id="IPR004154">
    <property type="entry name" value="Anticodon-bd"/>
</dbReference>
<dbReference type="InterPro" id="IPR036621">
    <property type="entry name" value="Anticodon-bd_dom_sf"/>
</dbReference>
<dbReference type="InterPro" id="IPR027031">
    <property type="entry name" value="Gly-tRNA_synthase/POLG2"/>
</dbReference>
<dbReference type="InterPro" id="IPR022961">
    <property type="entry name" value="Gly_tRNA_ligase_bac"/>
</dbReference>
<dbReference type="InterPro" id="IPR033731">
    <property type="entry name" value="GlyRS-like_core"/>
</dbReference>
<dbReference type="InterPro" id="IPR002315">
    <property type="entry name" value="tRNA-synt_gly"/>
</dbReference>
<dbReference type="NCBIfam" id="TIGR00389">
    <property type="entry name" value="glyS_dimeric"/>
    <property type="match status" value="1"/>
</dbReference>
<dbReference type="NCBIfam" id="NF003211">
    <property type="entry name" value="PRK04173.1"/>
    <property type="match status" value="1"/>
</dbReference>
<dbReference type="PANTHER" id="PTHR10745:SF8">
    <property type="entry name" value="DNA POLYMERASE SUBUNIT GAMMA-2, MITOCHONDRIAL"/>
    <property type="match status" value="1"/>
</dbReference>
<dbReference type="PANTHER" id="PTHR10745">
    <property type="entry name" value="GLYCYL-TRNA SYNTHETASE/DNA POLYMERASE SUBUNIT GAMMA-2"/>
    <property type="match status" value="1"/>
</dbReference>
<dbReference type="Pfam" id="PF03129">
    <property type="entry name" value="HGTP_anticodon"/>
    <property type="match status" value="1"/>
</dbReference>
<dbReference type="Pfam" id="PF00587">
    <property type="entry name" value="tRNA-synt_2b"/>
    <property type="match status" value="1"/>
</dbReference>
<dbReference type="PRINTS" id="PR01043">
    <property type="entry name" value="TRNASYNTHGLY"/>
</dbReference>
<dbReference type="SUPFAM" id="SSF52954">
    <property type="entry name" value="Class II aaRS ABD-related"/>
    <property type="match status" value="1"/>
</dbReference>
<dbReference type="SUPFAM" id="SSF55681">
    <property type="entry name" value="Class II aaRS and biotin synthetases"/>
    <property type="match status" value="1"/>
</dbReference>
<dbReference type="PROSITE" id="PS50862">
    <property type="entry name" value="AA_TRNA_LIGASE_II"/>
    <property type="match status" value="1"/>
</dbReference>
<comment type="function">
    <text evidence="1">Catalyzes the attachment of glycine to tRNA(Gly).</text>
</comment>
<comment type="catalytic activity">
    <reaction evidence="1">
        <text>tRNA(Gly) + glycine + ATP = glycyl-tRNA(Gly) + AMP + diphosphate</text>
        <dbReference type="Rhea" id="RHEA:16013"/>
        <dbReference type="Rhea" id="RHEA-COMP:9664"/>
        <dbReference type="Rhea" id="RHEA-COMP:9683"/>
        <dbReference type="ChEBI" id="CHEBI:30616"/>
        <dbReference type="ChEBI" id="CHEBI:33019"/>
        <dbReference type="ChEBI" id="CHEBI:57305"/>
        <dbReference type="ChEBI" id="CHEBI:78442"/>
        <dbReference type="ChEBI" id="CHEBI:78522"/>
        <dbReference type="ChEBI" id="CHEBI:456215"/>
        <dbReference type="EC" id="6.1.1.14"/>
    </reaction>
</comment>
<comment type="subunit">
    <text evidence="1">Homodimer.</text>
</comment>
<comment type="subcellular location">
    <subcellularLocation>
        <location evidence="1">Cytoplasm</location>
    </subcellularLocation>
</comment>
<comment type="similarity">
    <text evidence="1">Belongs to the class-II aminoacyl-tRNA synthetase family.</text>
</comment>
<comment type="sequence caution" evidence="2">
    <conflict type="erroneous initiation">
        <sequence resource="EMBL-CDS" id="AAT82702"/>
    </conflict>
</comment>
<name>SYG_CUTAK</name>
<reference key="1">
    <citation type="journal article" date="2004" name="Science">
        <title>The complete genome sequence of Propionibacterium acnes, a commensal of human skin.</title>
        <authorList>
            <person name="Brueggemann H."/>
            <person name="Henne A."/>
            <person name="Hoster F."/>
            <person name="Liesegang H."/>
            <person name="Wiezer A."/>
            <person name="Strittmatter A."/>
            <person name="Hujer S."/>
            <person name="Duerre P."/>
            <person name="Gottschalk G."/>
        </authorList>
    </citation>
    <scope>NUCLEOTIDE SEQUENCE [LARGE SCALE GENOMIC DNA]</scope>
    <source>
        <strain>DSM 16379 / KPA171202</strain>
    </source>
</reference>
<protein>
    <recommendedName>
        <fullName evidence="1">Glycine--tRNA ligase</fullName>
        <ecNumber evidence="1">6.1.1.14</ecNumber>
    </recommendedName>
    <alternativeName>
        <fullName evidence="1">Glycyl-tRNA synthetase</fullName>
        <shortName evidence="1">GlyRS</shortName>
    </alternativeName>
</protein>
<proteinExistence type="inferred from homology"/>
<keyword id="KW-0030">Aminoacyl-tRNA synthetase</keyword>
<keyword id="KW-0067">ATP-binding</keyword>
<keyword id="KW-0963">Cytoplasm</keyword>
<keyword id="KW-0436">Ligase</keyword>
<keyword id="KW-0547">Nucleotide-binding</keyword>
<keyword id="KW-0648">Protein biosynthesis</keyword>
<gene>
    <name evidence="1" type="primary">glyQS</name>
    <name type="ordered locus">PPA0949</name>
</gene>
<evidence type="ECO:0000255" key="1">
    <source>
        <dbReference type="HAMAP-Rule" id="MF_00253"/>
    </source>
</evidence>
<evidence type="ECO:0000305" key="2"/>
<organism>
    <name type="scientific">Cutibacterium acnes (strain DSM 16379 / KPA171202)</name>
    <name type="common">Propionibacterium acnes</name>
    <dbReference type="NCBI Taxonomy" id="267747"/>
    <lineage>
        <taxon>Bacteria</taxon>
        <taxon>Bacillati</taxon>
        <taxon>Actinomycetota</taxon>
        <taxon>Actinomycetes</taxon>
        <taxon>Propionibacteriales</taxon>
        <taxon>Propionibacteriaceae</taxon>
        <taxon>Cutibacterium</taxon>
    </lineage>
</organism>
<accession>Q6A964</accession>